<dbReference type="EMBL" id="X86563">
    <property type="protein sequence ID" value="CAA60297.1"/>
    <property type="molecule type" value="Genomic_DNA"/>
</dbReference>
<dbReference type="PIR" id="S58563">
    <property type="entry name" value="S58563"/>
</dbReference>
<dbReference type="RefSeq" id="NP_043036.1">
    <property type="nucleotide sequence ID" value="NC_001666.2"/>
</dbReference>
<dbReference type="SMR" id="P46641"/>
<dbReference type="FunCoup" id="P46641">
    <property type="interactions" value="192"/>
</dbReference>
<dbReference type="STRING" id="4577.P46641"/>
<dbReference type="PaxDb" id="4577-GRMZM5G831540_P01"/>
<dbReference type="GeneID" id="845175"/>
<dbReference type="KEGG" id="zma:845175"/>
<dbReference type="MaizeGDB" id="118235"/>
<dbReference type="eggNOG" id="ENOG502QV51">
    <property type="taxonomic scope" value="Eukaryota"/>
</dbReference>
<dbReference type="HOGENOM" id="CLU_105224_0_0_1"/>
<dbReference type="InParanoid" id="P46641"/>
<dbReference type="OMA" id="VVIYHAI"/>
<dbReference type="OrthoDB" id="601185at2759"/>
<dbReference type="Proteomes" id="UP000007305">
    <property type="component" value="Chloroplast"/>
</dbReference>
<dbReference type="GO" id="GO:0009706">
    <property type="term" value="C:chloroplast inner membrane"/>
    <property type="evidence" value="ECO:0007669"/>
    <property type="project" value="UniProtKB-SubCell"/>
</dbReference>
<dbReference type="GO" id="GO:0015297">
    <property type="term" value="F:antiporter activity"/>
    <property type="evidence" value="ECO:0007669"/>
    <property type="project" value="UniProtKB-KW"/>
</dbReference>
<dbReference type="GO" id="GO:0015078">
    <property type="term" value="F:proton transmembrane transporter activity"/>
    <property type="evidence" value="ECO:0007669"/>
    <property type="project" value="UniProtKB-UniRule"/>
</dbReference>
<dbReference type="GO" id="GO:0006813">
    <property type="term" value="P:potassium ion transport"/>
    <property type="evidence" value="ECO:0007669"/>
    <property type="project" value="UniProtKB-UniRule"/>
</dbReference>
<dbReference type="HAMAP" id="MF_01308">
    <property type="entry name" value="CemA_PxcA"/>
    <property type="match status" value="1"/>
</dbReference>
<dbReference type="InterPro" id="IPR004282">
    <property type="entry name" value="CemA"/>
</dbReference>
<dbReference type="PANTHER" id="PTHR33650:SF2">
    <property type="entry name" value="CHLOROPLAST ENVELOPE MEMBRANE PROTEIN"/>
    <property type="match status" value="1"/>
</dbReference>
<dbReference type="PANTHER" id="PTHR33650">
    <property type="entry name" value="CHLOROPLAST ENVELOPE MEMBRANE PROTEIN-RELATED"/>
    <property type="match status" value="1"/>
</dbReference>
<dbReference type="Pfam" id="PF03040">
    <property type="entry name" value="CemA"/>
    <property type="match status" value="1"/>
</dbReference>
<accession>P46641</accession>
<geneLocation type="chloroplast"/>
<gene>
    <name evidence="1" type="primary">cemA</name>
    <name type="synonym">ycf10</name>
</gene>
<comment type="function">
    <text evidence="1">Contributes to K(+)/H(+) antiport activity by supporting proton efflux to control proton extrusion and homeostasis in chloroplasts in a light-dependent manner to modulate photosynthesis. Prevents excessive induction of non-photochemical quenching (NPQ) under continuous-light conditions. Indirectly promotes efficient inorganic carbon uptake into chloroplasts.</text>
</comment>
<comment type="catalytic activity">
    <reaction evidence="1">
        <text>K(+)(in) + H(+)(out) = K(+)(out) + H(+)(in)</text>
        <dbReference type="Rhea" id="RHEA:29467"/>
        <dbReference type="ChEBI" id="CHEBI:15378"/>
        <dbReference type="ChEBI" id="CHEBI:29103"/>
    </reaction>
</comment>
<comment type="subcellular location">
    <subcellularLocation>
        <location evidence="1">Plastid</location>
        <location evidence="1">Chloroplast inner membrane</location>
        <topology evidence="1">Multi-pass membrane protein</topology>
    </subcellularLocation>
</comment>
<comment type="similarity">
    <text evidence="1 2">Belongs to the CemA family.</text>
</comment>
<protein>
    <recommendedName>
        <fullName evidence="1">Potassium/proton antiporter CemA</fullName>
    </recommendedName>
    <alternativeName>
        <fullName evidence="1">Chloroplast envelope membrane protein A</fullName>
        <shortName evidence="1">CemA</shortName>
    </alternativeName>
</protein>
<proteinExistence type="inferred from homology"/>
<organism>
    <name type="scientific">Zea mays</name>
    <name type="common">Maize</name>
    <dbReference type="NCBI Taxonomy" id="4577"/>
    <lineage>
        <taxon>Eukaryota</taxon>
        <taxon>Viridiplantae</taxon>
        <taxon>Streptophyta</taxon>
        <taxon>Embryophyta</taxon>
        <taxon>Tracheophyta</taxon>
        <taxon>Spermatophyta</taxon>
        <taxon>Magnoliopsida</taxon>
        <taxon>Liliopsida</taxon>
        <taxon>Poales</taxon>
        <taxon>Poaceae</taxon>
        <taxon>PACMAD clade</taxon>
        <taxon>Panicoideae</taxon>
        <taxon>Andropogonodae</taxon>
        <taxon>Andropogoneae</taxon>
        <taxon>Tripsacinae</taxon>
        <taxon>Zea</taxon>
    </lineage>
</organism>
<evidence type="ECO:0000255" key="1">
    <source>
        <dbReference type="HAMAP-Rule" id="MF_01308"/>
    </source>
</evidence>
<evidence type="ECO:0000305" key="2"/>
<sequence>MKKKKALPSFLYLVFIVLLPWGVSFSFNKCLELWIKNWWNTRQSETFLTDIQEKRILEGFIELEELFLLDEMIKEKPKTHVQKLPIGIHKEIIQLAKIDNEDHLHIILHFSTNIICLAILSGSFFLGKEELVILNSWVQEFFYNLNDSIKAFFILLVTDFFVGFHSTRGWELLIRWVYNNLGWAPNELIFTIFVCSFPVILDTCLKFWVFFCLNRLSPSLVVIYHSISEA</sequence>
<keyword id="KW-0050">Antiport</keyword>
<keyword id="KW-0150">Chloroplast</keyword>
<keyword id="KW-0375">Hydrogen ion transport</keyword>
<keyword id="KW-0406">Ion transport</keyword>
<keyword id="KW-0472">Membrane</keyword>
<keyword id="KW-0934">Plastid</keyword>
<keyword id="KW-1001">Plastid inner membrane</keyword>
<keyword id="KW-0630">Potassium</keyword>
<keyword id="KW-0633">Potassium transport</keyword>
<keyword id="KW-1185">Reference proteome</keyword>
<keyword id="KW-0812">Transmembrane</keyword>
<keyword id="KW-1133">Transmembrane helix</keyword>
<keyword id="KW-0813">Transport</keyword>
<name>CEMA_MAIZE</name>
<feature type="chain" id="PRO_0000216646" description="Potassium/proton antiporter CemA">
    <location>
        <begin position="1"/>
        <end position="230"/>
    </location>
</feature>
<feature type="transmembrane region" description="Helical" evidence="1">
    <location>
        <begin position="7"/>
        <end position="27"/>
    </location>
</feature>
<feature type="transmembrane region" description="Helical" evidence="1">
    <location>
        <begin position="106"/>
        <end position="126"/>
    </location>
</feature>
<feature type="transmembrane region" description="Helical" evidence="1">
    <location>
        <begin position="145"/>
        <end position="165"/>
    </location>
</feature>
<feature type="transmembrane region" description="Helical" evidence="1">
    <location>
        <begin position="181"/>
        <end position="201"/>
    </location>
</feature>
<reference key="1">
    <citation type="journal article" date="1995" name="J. Mol. Biol.">
        <title>Complete sequence of the maize chloroplast genome: gene content, hotspots of divergence and fine tuning of genetic information by transcript editing.</title>
        <authorList>
            <person name="Maier R.M."/>
            <person name="Neckermann K."/>
            <person name="Igloi G.L."/>
            <person name="Koessel H."/>
        </authorList>
    </citation>
    <scope>NUCLEOTIDE SEQUENCE [LARGE SCALE GENOMIC DNA]</scope>
    <source>
        <strain>cv. B73</strain>
    </source>
</reference>